<protein>
    <recommendedName>
        <fullName>Iron sulfur cluster assembly protein 1, mitochondrial</fullName>
    </recommendedName>
    <alternativeName>
        <fullName>Iron sulfur cluster scaffold protein 1</fullName>
    </alternativeName>
</protein>
<proteinExistence type="inferred from homology"/>
<sequence length="213" mass="22901">MGVCVFFPLCLPCPGALTYIREAQFISSWTPADPRHKQLKMFLQRFVTVGGAAIGARSTMGAMGAIGAIGAKGTMNNIGRRMYHPKVIEHYTHPRNVGSMDKTLPNVGTGLVGAPACGDVMRLQIKVNDKTGVIEDVKFKTFGCGSAIASSSYMTELVHGMTLDDAAKIKNTTIAKELSLPPVKLHCSMLAEDAIKAAIKDYKSKRTSTTTLH</sequence>
<gene>
    <name type="primary">ISU1</name>
    <name type="ordered locus">CAGL0M02629g</name>
</gene>
<accession>Q6FJY3</accession>
<evidence type="ECO:0000250" key="1">
    <source>
        <dbReference type="UniProtKB" id="Q03020"/>
    </source>
</evidence>
<evidence type="ECO:0000250" key="2">
    <source>
        <dbReference type="UniProtKB" id="Q9UTC6"/>
    </source>
</evidence>
<evidence type="ECO:0000255" key="3"/>
<evidence type="ECO:0000305" key="4"/>
<name>ISU1_CANGA</name>
<dbReference type="EMBL" id="CR380959">
    <property type="protein sequence ID" value="CAG62437.1"/>
    <property type="molecule type" value="Genomic_DNA"/>
</dbReference>
<dbReference type="RefSeq" id="XP_449461.1">
    <property type="nucleotide sequence ID" value="XM_449461.1"/>
</dbReference>
<dbReference type="SMR" id="Q6FJY3"/>
<dbReference type="FunCoup" id="Q6FJY3">
    <property type="interactions" value="546"/>
</dbReference>
<dbReference type="STRING" id="284593.Q6FJY3"/>
<dbReference type="EnsemblFungi" id="CAGL0M02629g-T">
    <property type="protein sequence ID" value="CAGL0M02629g-T-p1"/>
    <property type="gene ID" value="CAGL0M02629g"/>
</dbReference>
<dbReference type="KEGG" id="cgr:2891469"/>
<dbReference type="CGD" id="CAL0136631">
    <property type="gene designation" value="CAGL0M02629g"/>
</dbReference>
<dbReference type="VEuPathDB" id="FungiDB:CAGL0M02629g"/>
<dbReference type="eggNOG" id="KOG3361">
    <property type="taxonomic scope" value="Eukaryota"/>
</dbReference>
<dbReference type="HOGENOM" id="CLU_079283_1_0_1"/>
<dbReference type="InParanoid" id="Q6FJY3"/>
<dbReference type="UniPathway" id="UPA00266"/>
<dbReference type="Proteomes" id="UP000002428">
    <property type="component" value="Chromosome M"/>
</dbReference>
<dbReference type="GO" id="GO:0005759">
    <property type="term" value="C:mitochondrial matrix"/>
    <property type="evidence" value="ECO:0007669"/>
    <property type="project" value="UniProtKB-SubCell"/>
</dbReference>
<dbReference type="GO" id="GO:0051537">
    <property type="term" value="F:2 iron, 2 sulfur cluster binding"/>
    <property type="evidence" value="ECO:0007669"/>
    <property type="project" value="UniProtKB-KW"/>
</dbReference>
<dbReference type="GO" id="GO:0001671">
    <property type="term" value="F:ATPase activator activity"/>
    <property type="evidence" value="ECO:0007669"/>
    <property type="project" value="EnsemblFungi"/>
</dbReference>
<dbReference type="GO" id="GO:0008198">
    <property type="term" value="F:ferrous iron binding"/>
    <property type="evidence" value="ECO:0007669"/>
    <property type="project" value="EnsemblFungi"/>
</dbReference>
<dbReference type="GO" id="GO:0008270">
    <property type="term" value="F:zinc ion binding"/>
    <property type="evidence" value="ECO:0007669"/>
    <property type="project" value="EnsemblFungi"/>
</dbReference>
<dbReference type="GO" id="GO:0006879">
    <property type="term" value="P:intracellular iron ion homeostasis"/>
    <property type="evidence" value="ECO:0007669"/>
    <property type="project" value="EnsemblFungi"/>
</dbReference>
<dbReference type="GO" id="GO:0016226">
    <property type="term" value="P:iron-sulfur cluster assembly"/>
    <property type="evidence" value="ECO:0007669"/>
    <property type="project" value="EnsemblFungi"/>
</dbReference>
<dbReference type="GO" id="GO:0002098">
    <property type="term" value="P:tRNA wobble uridine modification"/>
    <property type="evidence" value="ECO:0007669"/>
    <property type="project" value="EnsemblFungi"/>
</dbReference>
<dbReference type="CDD" id="cd06664">
    <property type="entry name" value="IscU_like"/>
    <property type="match status" value="1"/>
</dbReference>
<dbReference type="FunFam" id="3.90.1010.10:FF:000005">
    <property type="entry name" value="Iron-sulfur cluster assembly protein"/>
    <property type="match status" value="1"/>
</dbReference>
<dbReference type="Gene3D" id="3.90.1010.10">
    <property type="match status" value="1"/>
</dbReference>
<dbReference type="InterPro" id="IPR011339">
    <property type="entry name" value="ISCU"/>
</dbReference>
<dbReference type="InterPro" id="IPR002871">
    <property type="entry name" value="NIF_FeS_clus_asmbl_NifU_N"/>
</dbReference>
<dbReference type="NCBIfam" id="TIGR01999">
    <property type="entry name" value="iscU"/>
    <property type="match status" value="1"/>
</dbReference>
<dbReference type="PANTHER" id="PTHR10093">
    <property type="entry name" value="IRON-SULFUR CLUSTER ASSEMBLY ENZYME NIFU HOMOLOG"/>
    <property type="match status" value="1"/>
</dbReference>
<dbReference type="Pfam" id="PF01592">
    <property type="entry name" value="NifU_N"/>
    <property type="match status" value="1"/>
</dbReference>
<dbReference type="SUPFAM" id="SSF82649">
    <property type="entry name" value="SufE/NifU"/>
    <property type="match status" value="1"/>
</dbReference>
<feature type="transit peptide" description="Mitochondrion" evidence="3">
    <location>
        <begin position="1"/>
        <end status="unknown"/>
    </location>
</feature>
<feature type="chain" id="PRO_0000019695" description="Iron sulfur cluster assembly protein 1, mitochondrial">
    <location>
        <begin status="unknown"/>
        <end position="213"/>
    </location>
</feature>
<reference key="1">
    <citation type="journal article" date="2004" name="Nature">
        <title>Genome evolution in yeasts.</title>
        <authorList>
            <person name="Dujon B."/>
            <person name="Sherman D."/>
            <person name="Fischer G."/>
            <person name="Durrens P."/>
            <person name="Casaregola S."/>
            <person name="Lafontaine I."/>
            <person name="de Montigny J."/>
            <person name="Marck C."/>
            <person name="Neuveglise C."/>
            <person name="Talla E."/>
            <person name="Goffard N."/>
            <person name="Frangeul L."/>
            <person name="Aigle M."/>
            <person name="Anthouard V."/>
            <person name="Babour A."/>
            <person name="Barbe V."/>
            <person name="Barnay S."/>
            <person name="Blanchin S."/>
            <person name="Beckerich J.-M."/>
            <person name="Beyne E."/>
            <person name="Bleykasten C."/>
            <person name="Boisrame A."/>
            <person name="Boyer J."/>
            <person name="Cattolico L."/>
            <person name="Confanioleri F."/>
            <person name="de Daruvar A."/>
            <person name="Despons L."/>
            <person name="Fabre E."/>
            <person name="Fairhead C."/>
            <person name="Ferry-Dumazet H."/>
            <person name="Groppi A."/>
            <person name="Hantraye F."/>
            <person name="Hennequin C."/>
            <person name="Jauniaux N."/>
            <person name="Joyet P."/>
            <person name="Kachouri R."/>
            <person name="Kerrest A."/>
            <person name="Koszul R."/>
            <person name="Lemaire M."/>
            <person name="Lesur I."/>
            <person name="Ma L."/>
            <person name="Muller H."/>
            <person name="Nicaud J.-M."/>
            <person name="Nikolski M."/>
            <person name="Oztas S."/>
            <person name="Ozier-Kalogeropoulos O."/>
            <person name="Pellenz S."/>
            <person name="Potier S."/>
            <person name="Richard G.-F."/>
            <person name="Straub M.-L."/>
            <person name="Suleau A."/>
            <person name="Swennen D."/>
            <person name="Tekaia F."/>
            <person name="Wesolowski-Louvel M."/>
            <person name="Westhof E."/>
            <person name="Wirth B."/>
            <person name="Zeniou-Meyer M."/>
            <person name="Zivanovic Y."/>
            <person name="Bolotin-Fukuhara M."/>
            <person name="Thierry A."/>
            <person name="Bouchier C."/>
            <person name="Caudron B."/>
            <person name="Scarpelli C."/>
            <person name="Gaillardin C."/>
            <person name="Weissenbach J."/>
            <person name="Wincker P."/>
            <person name="Souciet J.-L."/>
        </authorList>
    </citation>
    <scope>NUCLEOTIDE SEQUENCE [LARGE SCALE GENOMIC DNA]</scope>
    <source>
        <strain>ATCC 2001 / BCRC 20586 / JCM 3761 / NBRC 0622 / NRRL Y-65 / CBS 138</strain>
    </source>
</reference>
<keyword id="KW-0001">2Fe-2S</keyword>
<keyword id="KW-0408">Iron</keyword>
<keyword id="KW-0411">Iron-sulfur</keyword>
<keyword id="KW-0479">Metal-binding</keyword>
<keyword id="KW-0496">Mitochondrion</keyword>
<keyword id="KW-1185">Reference proteome</keyword>
<keyword id="KW-0809">Transit peptide</keyword>
<organism>
    <name type="scientific">Candida glabrata (strain ATCC 2001 / BCRC 20586 / JCM 3761 / NBRC 0622 / NRRL Y-65 / CBS 138)</name>
    <name type="common">Yeast</name>
    <name type="synonym">Nakaseomyces glabratus</name>
    <dbReference type="NCBI Taxonomy" id="284593"/>
    <lineage>
        <taxon>Eukaryota</taxon>
        <taxon>Fungi</taxon>
        <taxon>Dikarya</taxon>
        <taxon>Ascomycota</taxon>
        <taxon>Saccharomycotina</taxon>
        <taxon>Saccharomycetes</taxon>
        <taxon>Saccharomycetales</taxon>
        <taxon>Saccharomycetaceae</taxon>
        <taxon>Nakaseomyces</taxon>
    </lineage>
</organism>
<comment type="function">
    <text evidence="1">Scaffold protein for the de novo synthesis of iron-sulfur (Fe-S) clusters within mitochondria, which is required for maturation of both mitochondrial and cytoplasmic [2Fe-2S] and [4Fe-4S] proteins. First, a [2Fe-2S] cluster is transiently assembled on the scaffold protein ISU1. In a second step, the cluster is released from ISU1, transferred to a glutaredoxin, followed by the formation of mitochondrial [2Fe-2S] proteins, the synthesis of [4Fe-4S] clusters and their target-specific insertion into the recipient apoproteins. Cluster assembly on ISU1 depends on the function of the cysteine desulfurase complex NFS1-ISD11, which serves as the sulfur donor for cluster synthesis, the iron-binding protein frataxin as the putative iron donor, and the electron transfer chain comprised of ferredoxin reductase and ferredoxin, which receive their electrons from NADH.</text>
</comment>
<comment type="cofactor">
    <cofactor evidence="2">
        <name>[2Fe-2S] cluster</name>
        <dbReference type="ChEBI" id="CHEBI:190135"/>
    </cofactor>
    <text evidence="2">Binds 1 [2Fe-2S] cluster per subunit.</text>
</comment>
<comment type="pathway">
    <text evidence="1">Cofactor biosynthesis; iron-sulfur cluster biosynthesis.</text>
</comment>
<comment type="subunit">
    <text evidence="1">Component of the core Fe-S cluster (ISC) assembly machinery.</text>
</comment>
<comment type="subcellular location">
    <subcellularLocation>
        <location evidence="1">Mitochondrion matrix</location>
    </subcellularLocation>
</comment>
<comment type="similarity">
    <text evidence="4">Belongs to the NifU family.</text>
</comment>